<sequence length="130" mass="14981">MSWKVPMLVGLVVLGTHIWTINKEFLDVTKDLDYFVASVEFAVAQFNDNNSEENTYRLLEVGRAQKKTWTMIFLMDLEMGRTICKKHDENIHNCPLLQGSGEKKVHCVFQVDARPWFSHFTVLTSTCVPT</sequence>
<feature type="signal peptide" evidence="3">
    <location>
        <begin position="1"/>
        <end position="23"/>
    </location>
</feature>
<feature type="chain" id="PRO_0000285794" description="Cystatin domain-containing protein 1">
    <location>
        <begin position="24"/>
        <end position="130"/>
    </location>
</feature>
<feature type="domain" description="Cystatin" evidence="3">
    <location>
        <begin position="37"/>
        <end position="116"/>
    </location>
</feature>
<feature type="disulfide bond" evidence="2">
    <location>
        <begin position="84"/>
        <end position="94"/>
    </location>
</feature>
<feature type="disulfide bond" evidence="2">
    <location>
        <begin position="107"/>
        <end position="127"/>
    </location>
</feature>
<keyword id="KW-1015">Disulfide bond</keyword>
<keyword id="KW-0646">Protease inhibitor</keyword>
<keyword id="KW-1185">Reference proteome</keyword>
<keyword id="KW-0964">Secreted</keyword>
<keyword id="KW-0732">Signal</keyword>
<keyword id="KW-0789">Thiol protease inhibitor</keyword>
<dbReference type="EMBL" id="AF442205">
    <property type="protein sequence ID" value="AAL35350.1"/>
    <property type="molecule type" value="mRNA"/>
</dbReference>
<dbReference type="SMR" id="Q8VIH8"/>
<dbReference type="FunCoup" id="Q8VIH8">
    <property type="interactions" value="32"/>
</dbReference>
<dbReference type="STRING" id="10116.ENSRNOP00000006555"/>
<dbReference type="MEROPS" id="I25.023"/>
<dbReference type="PaxDb" id="10116-ENSRNOP00000006555"/>
<dbReference type="UCSC" id="RGD:708555">
    <property type="organism name" value="rat"/>
</dbReference>
<dbReference type="AGR" id="RGD:708555"/>
<dbReference type="RGD" id="708555">
    <property type="gene designation" value="Cstdc1"/>
</dbReference>
<dbReference type="eggNOG" id="ENOG502TDK9">
    <property type="taxonomic scope" value="Eukaryota"/>
</dbReference>
<dbReference type="InParanoid" id="Q8VIH8"/>
<dbReference type="PhylomeDB" id="Q8VIH8"/>
<dbReference type="PRO" id="PR:Q8VIH8"/>
<dbReference type="Proteomes" id="UP000002494">
    <property type="component" value="Unplaced"/>
</dbReference>
<dbReference type="GO" id="GO:0005576">
    <property type="term" value="C:extracellular region"/>
    <property type="evidence" value="ECO:0007669"/>
    <property type="project" value="UniProtKB-SubCell"/>
</dbReference>
<dbReference type="GO" id="GO:0004869">
    <property type="term" value="F:cysteine-type endopeptidase inhibitor activity"/>
    <property type="evidence" value="ECO:0007669"/>
    <property type="project" value="UniProtKB-KW"/>
</dbReference>
<dbReference type="CDD" id="cd00042">
    <property type="entry name" value="CY"/>
    <property type="match status" value="1"/>
</dbReference>
<dbReference type="Gene3D" id="3.10.450.10">
    <property type="match status" value="1"/>
</dbReference>
<dbReference type="InterPro" id="IPR000010">
    <property type="entry name" value="Cystatin_dom"/>
</dbReference>
<dbReference type="InterPro" id="IPR046350">
    <property type="entry name" value="Cystatin_sf"/>
</dbReference>
<dbReference type="InterPro" id="IPR052333">
    <property type="entry name" value="Cystatin_spermatogenesis"/>
</dbReference>
<dbReference type="PANTHER" id="PTHR47393">
    <property type="entry name" value="CYSTATIN-12-RELATED"/>
    <property type="match status" value="1"/>
</dbReference>
<dbReference type="PANTHER" id="PTHR47393:SF4">
    <property type="entry name" value="CYSTATIN-14"/>
    <property type="match status" value="1"/>
</dbReference>
<dbReference type="Pfam" id="PF00031">
    <property type="entry name" value="Cystatin"/>
    <property type="match status" value="1"/>
</dbReference>
<dbReference type="SMART" id="SM00043">
    <property type="entry name" value="CY"/>
    <property type="match status" value="1"/>
</dbReference>
<dbReference type="SUPFAM" id="SSF54403">
    <property type="entry name" value="Cystatin/monellin"/>
    <property type="match status" value="1"/>
</dbReference>
<proteinExistence type="evidence at transcript level"/>
<comment type="function">
    <text evidence="1">May play a specialized role in spermatogenesis.</text>
</comment>
<comment type="subcellular location">
    <subcellularLocation>
        <location evidence="5">Secreted</location>
    </subcellularLocation>
</comment>
<comment type="similarity">
    <text evidence="5">Belongs to the cystatin family.</text>
</comment>
<accession>Q8VIH8</accession>
<protein>
    <recommendedName>
        <fullName evidence="6">Cystatin domain-containing protein 1</fullName>
    </recommendedName>
    <alternativeName>
        <fullName evidence="4">Cystatin SC</fullName>
    </alternativeName>
    <alternativeName>
        <fullName evidence="6">Cystatin-14</fullName>
    </alternativeName>
</protein>
<gene>
    <name evidence="6" type="primary">Cstdc1</name>
    <name evidence="6" type="synonym">Cst14</name>
</gene>
<reference key="1">
    <citation type="journal article" date="2002" name="Biol. Reprod.">
        <title>Identification and characterization of testis- and epididymis-specific genes: cystatin SC and cystatin TE-1.</title>
        <authorList>
            <person name="Li Y."/>
            <person name="Friel P.J."/>
            <person name="Robinson M.O."/>
            <person name="McLean D.J."/>
            <person name="Griswold M.D."/>
        </authorList>
    </citation>
    <scope>NUCLEOTIDE SEQUENCE [MRNA]</scope>
    <source>
        <strain>Sprague-Dawley</strain>
        <tissue>Testis</tissue>
    </source>
</reference>
<organism>
    <name type="scientific">Rattus norvegicus</name>
    <name type="common">Rat</name>
    <dbReference type="NCBI Taxonomy" id="10116"/>
    <lineage>
        <taxon>Eukaryota</taxon>
        <taxon>Metazoa</taxon>
        <taxon>Chordata</taxon>
        <taxon>Craniata</taxon>
        <taxon>Vertebrata</taxon>
        <taxon>Euteleostomi</taxon>
        <taxon>Mammalia</taxon>
        <taxon>Eutheria</taxon>
        <taxon>Euarchontoglires</taxon>
        <taxon>Glires</taxon>
        <taxon>Rodentia</taxon>
        <taxon>Myomorpha</taxon>
        <taxon>Muroidea</taxon>
        <taxon>Muridae</taxon>
        <taxon>Murinae</taxon>
        <taxon>Rattus</taxon>
    </lineage>
</organism>
<name>CSTD1_RAT</name>
<evidence type="ECO:0000250" key="1"/>
<evidence type="ECO:0000250" key="2">
    <source>
        <dbReference type="UniProtKB" id="P01037"/>
    </source>
</evidence>
<evidence type="ECO:0000255" key="3"/>
<evidence type="ECO:0000303" key="4">
    <source>
    </source>
</evidence>
<evidence type="ECO:0000305" key="5"/>
<evidence type="ECO:0000312" key="6">
    <source>
        <dbReference type="RGD" id="708555"/>
    </source>
</evidence>